<dbReference type="EC" id="7.1.2.2" evidence="1"/>
<dbReference type="EMBL" id="AP009123">
    <property type="protein sequence ID" value="BAF41232.1"/>
    <property type="molecule type" value="Genomic_DNA"/>
</dbReference>
<dbReference type="RefSeq" id="YP_913172.1">
    <property type="nucleotide sequence ID" value="NC_008641.1"/>
</dbReference>
<dbReference type="SMR" id="A0ZZ20"/>
<dbReference type="GeneID" id="4575184"/>
<dbReference type="GO" id="GO:0009535">
    <property type="term" value="C:chloroplast thylakoid membrane"/>
    <property type="evidence" value="ECO:0007669"/>
    <property type="project" value="UniProtKB-SubCell"/>
</dbReference>
<dbReference type="GO" id="GO:0045259">
    <property type="term" value="C:proton-transporting ATP synthase complex"/>
    <property type="evidence" value="ECO:0007669"/>
    <property type="project" value="UniProtKB-KW"/>
</dbReference>
<dbReference type="GO" id="GO:0043531">
    <property type="term" value="F:ADP binding"/>
    <property type="evidence" value="ECO:0007669"/>
    <property type="project" value="TreeGrafter"/>
</dbReference>
<dbReference type="GO" id="GO:0005524">
    <property type="term" value="F:ATP binding"/>
    <property type="evidence" value="ECO:0007669"/>
    <property type="project" value="UniProtKB-UniRule"/>
</dbReference>
<dbReference type="GO" id="GO:0046933">
    <property type="term" value="F:proton-transporting ATP synthase activity, rotational mechanism"/>
    <property type="evidence" value="ECO:0007669"/>
    <property type="project" value="UniProtKB-UniRule"/>
</dbReference>
<dbReference type="CDD" id="cd18113">
    <property type="entry name" value="ATP-synt_F1_alpha_C"/>
    <property type="match status" value="1"/>
</dbReference>
<dbReference type="CDD" id="cd18116">
    <property type="entry name" value="ATP-synt_F1_alpha_N"/>
    <property type="match status" value="1"/>
</dbReference>
<dbReference type="CDD" id="cd01132">
    <property type="entry name" value="F1-ATPase_alpha_CD"/>
    <property type="match status" value="1"/>
</dbReference>
<dbReference type="FunFam" id="1.20.150.20:FF:000001">
    <property type="entry name" value="ATP synthase subunit alpha"/>
    <property type="match status" value="1"/>
</dbReference>
<dbReference type="FunFam" id="2.40.30.20:FF:000001">
    <property type="entry name" value="ATP synthase subunit alpha"/>
    <property type="match status" value="1"/>
</dbReference>
<dbReference type="FunFam" id="3.40.50.300:FF:000002">
    <property type="entry name" value="ATP synthase subunit alpha"/>
    <property type="match status" value="1"/>
</dbReference>
<dbReference type="Gene3D" id="2.40.30.20">
    <property type="match status" value="1"/>
</dbReference>
<dbReference type="Gene3D" id="1.20.150.20">
    <property type="entry name" value="ATP synthase alpha/beta chain, C-terminal domain"/>
    <property type="match status" value="1"/>
</dbReference>
<dbReference type="Gene3D" id="3.40.50.300">
    <property type="entry name" value="P-loop containing nucleotide triphosphate hydrolases"/>
    <property type="match status" value="1"/>
</dbReference>
<dbReference type="HAMAP" id="MF_01346">
    <property type="entry name" value="ATP_synth_alpha_bact"/>
    <property type="match status" value="1"/>
</dbReference>
<dbReference type="InterPro" id="IPR023366">
    <property type="entry name" value="ATP_synth_asu-like_sf"/>
</dbReference>
<dbReference type="InterPro" id="IPR000793">
    <property type="entry name" value="ATP_synth_asu_C"/>
</dbReference>
<dbReference type="InterPro" id="IPR038376">
    <property type="entry name" value="ATP_synth_asu_C_sf"/>
</dbReference>
<dbReference type="InterPro" id="IPR033732">
    <property type="entry name" value="ATP_synth_F1_a_nt-bd_dom"/>
</dbReference>
<dbReference type="InterPro" id="IPR005294">
    <property type="entry name" value="ATP_synth_F1_asu"/>
</dbReference>
<dbReference type="InterPro" id="IPR020003">
    <property type="entry name" value="ATPase_a/bsu_AS"/>
</dbReference>
<dbReference type="InterPro" id="IPR004100">
    <property type="entry name" value="ATPase_F1/V1/A1_a/bsu_N"/>
</dbReference>
<dbReference type="InterPro" id="IPR036121">
    <property type="entry name" value="ATPase_F1/V1/A1_a/bsu_N_sf"/>
</dbReference>
<dbReference type="InterPro" id="IPR000194">
    <property type="entry name" value="ATPase_F1/V1/A1_a/bsu_nucl-bd"/>
</dbReference>
<dbReference type="InterPro" id="IPR027417">
    <property type="entry name" value="P-loop_NTPase"/>
</dbReference>
<dbReference type="NCBIfam" id="TIGR00962">
    <property type="entry name" value="atpA"/>
    <property type="match status" value="1"/>
</dbReference>
<dbReference type="NCBIfam" id="NF009884">
    <property type="entry name" value="PRK13343.1"/>
    <property type="match status" value="1"/>
</dbReference>
<dbReference type="PANTHER" id="PTHR48082">
    <property type="entry name" value="ATP SYNTHASE SUBUNIT ALPHA, MITOCHONDRIAL"/>
    <property type="match status" value="1"/>
</dbReference>
<dbReference type="PANTHER" id="PTHR48082:SF2">
    <property type="entry name" value="ATP SYNTHASE SUBUNIT ALPHA, MITOCHONDRIAL"/>
    <property type="match status" value="1"/>
</dbReference>
<dbReference type="Pfam" id="PF00006">
    <property type="entry name" value="ATP-synt_ab"/>
    <property type="match status" value="1"/>
</dbReference>
<dbReference type="Pfam" id="PF00306">
    <property type="entry name" value="ATP-synt_ab_C"/>
    <property type="match status" value="1"/>
</dbReference>
<dbReference type="Pfam" id="PF02874">
    <property type="entry name" value="ATP-synt_ab_N"/>
    <property type="match status" value="1"/>
</dbReference>
<dbReference type="PIRSF" id="PIRSF039088">
    <property type="entry name" value="F_ATPase_subunit_alpha"/>
    <property type="match status" value="1"/>
</dbReference>
<dbReference type="SUPFAM" id="SSF47917">
    <property type="entry name" value="C-terminal domain of alpha and beta subunits of F1 ATP synthase"/>
    <property type="match status" value="1"/>
</dbReference>
<dbReference type="SUPFAM" id="SSF50615">
    <property type="entry name" value="N-terminal domain of alpha and beta subunits of F1 ATP synthase"/>
    <property type="match status" value="1"/>
</dbReference>
<dbReference type="SUPFAM" id="SSF52540">
    <property type="entry name" value="P-loop containing nucleoside triphosphate hydrolases"/>
    <property type="match status" value="1"/>
</dbReference>
<dbReference type="PROSITE" id="PS00152">
    <property type="entry name" value="ATPASE_ALPHA_BETA"/>
    <property type="match status" value="1"/>
</dbReference>
<sequence>MVTIRADEISNIIRERIEQYNREVKIVNTGTVLQVGDGIARIHGLDEVMAGELVEFEEGTIGIALNLESNNVGVVLMGDGLMIQEGSSVKATGKIAQIPVSEAYLGRVINALAKPIDGWGEISASESRLIESPAPGIISRRSVYEPLQTGLIAIDSMIPIGRGQRELIFGDRQTGKTAVATDTILNQQGQNVICVYVAIGQKASSVAQVVTTFQERGAMEYTIVVAETADSPATLQYLAPYTGAALAEYFMYRERHTLIIYDDLSKQAQAYRQMSLLLRRPPGREAYPGDVFYLHSRLLERAAKSSSQLGEGSMTALPIVETQSGDVSAYIPTNVISITDGQIFLSADLFNAGIRPAINVGISVSRVGSAAQIKAMKQVAGKSKLELAQFAELEAFAQFASDLDKATQNQLARGQRLRELLKQSQSAPLTVAEQISTIYTGTNGYLDSLEIGQVRKFLVELRTYLKTNKPQFQEIISSTKTFTEEAETLLKDAIQDQMERFRLQEQL</sequence>
<proteinExistence type="inferred from homology"/>
<gene>
    <name evidence="1" type="primary">atpA</name>
</gene>
<keyword id="KW-0066">ATP synthesis</keyword>
<keyword id="KW-0067">ATP-binding</keyword>
<keyword id="KW-0139">CF(1)</keyword>
<keyword id="KW-0150">Chloroplast</keyword>
<keyword id="KW-0375">Hydrogen ion transport</keyword>
<keyword id="KW-0406">Ion transport</keyword>
<keyword id="KW-0472">Membrane</keyword>
<keyword id="KW-0547">Nucleotide-binding</keyword>
<keyword id="KW-0934">Plastid</keyword>
<keyword id="KW-0793">Thylakoid</keyword>
<keyword id="KW-1278">Translocase</keyword>
<keyword id="KW-0813">Transport</keyword>
<organism>
    <name type="scientific">Gossypium barbadense</name>
    <name type="common">Sea Island cotton</name>
    <name type="synonym">Hibiscus barbadensis</name>
    <dbReference type="NCBI Taxonomy" id="3634"/>
    <lineage>
        <taxon>Eukaryota</taxon>
        <taxon>Viridiplantae</taxon>
        <taxon>Streptophyta</taxon>
        <taxon>Embryophyta</taxon>
        <taxon>Tracheophyta</taxon>
        <taxon>Spermatophyta</taxon>
        <taxon>Magnoliopsida</taxon>
        <taxon>eudicotyledons</taxon>
        <taxon>Gunneridae</taxon>
        <taxon>Pentapetalae</taxon>
        <taxon>rosids</taxon>
        <taxon>malvids</taxon>
        <taxon>Malvales</taxon>
        <taxon>Malvaceae</taxon>
        <taxon>Malvoideae</taxon>
        <taxon>Gossypium</taxon>
    </lineage>
</organism>
<comment type="function">
    <text evidence="1">Produces ATP from ADP in the presence of a proton gradient across the membrane. The alpha chain is a regulatory subunit.</text>
</comment>
<comment type="catalytic activity">
    <reaction evidence="1">
        <text>ATP + H2O + 4 H(+)(in) = ADP + phosphate + 5 H(+)(out)</text>
        <dbReference type="Rhea" id="RHEA:57720"/>
        <dbReference type="ChEBI" id="CHEBI:15377"/>
        <dbReference type="ChEBI" id="CHEBI:15378"/>
        <dbReference type="ChEBI" id="CHEBI:30616"/>
        <dbReference type="ChEBI" id="CHEBI:43474"/>
        <dbReference type="ChEBI" id="CHEBI:456216"/>
        <dbReference type="EC" id="7.1.2.2"/>
    </reaction>
</comment>
<comment type="subunit">
    <text evidence="1">F-type ATPases have 2 components, CF(1) - the catalytic core - and CF(0) - the membrane proton channel. CF(1) has five subunits: alpha(3), beta(3), gamma(1), delta(1), epsilon(1). CF(0) has four main subunits: a, b, b' and c.</text>
</comment>
<comment type="subcellular location">
    <subcellularLocation>
        <location evidence="1">Plastid</location>
        <location evidence="1">Chloroplast thylakoid membrane</location>
        <topology evidence="1">Peripheral membrane protein</topology>
    </subcellularLocation>
</comment>
<comment type="similarity">
    <text evidence="1">Belongs to the ATPase alpha/beta chains family.</text>
</comment>
<name>ATPA_GOSBA</name>
<geneLocation type="chloroplast"/>
<feature type="chain" id="PRO_0000275167" description="ATP synthase subunit alpha, chloroplastic">
    <location>
        <begin position="1"/>
        <end position="507"/>
    </location>
</feature>
<feature type="binding site" evidence="1">
    <location>
        <begin position="170"/>
        <end position="177"/>
    </location>
    <ligand>
        <name>ATP</name>
        <dbReference type="ChEBI" id="CHEBI:30616"/>
    </ligand>
</feature>
<feature type="site" description="Required for activity" evidence="1">
    <location>
        <position position="363"/>
    </location>
</feature>
<reference key="1">
    <citation type="journal article" date="2006" name="Genes Genet. Syst.">
        <title>Complete nucleotide sequence of the cotton (Gossypium barbadense L.) chloroplast genome with a comparative analysis of sequences among 9 dicot plants.</title>
        <authorList>
            <person name="Ibrahim R.I.H."/>
            <person name="Azuma J."/>
            <person name="Sakamoto M."/>
        </authorList>
    </citation>
    <scope>NUCLEOTIDE SEQUENCE [LARGE SCALE GENOMIC DNA]</scope>
</reference>
<evidence type="ECO:0000255" key="1">
    <source>
        <dbReference type="HAMAP-Rule" id="MF_01346"/>
    </source>
</evidence>
<protein>
    <recommendedName>
        <fullName evidence="1">ATP synthase subunit alpha, chloroplastic</fullName>
        <ecNumber evidence="1">7.1.2.2</ecNumber>
    </recommendedName>
    <alternativeName>
        <fullName evidence="1">ATP synthase F1 sector subunit alpha</fullName>
    </alternativeName>
    <alternativeName>
        <fullName evidence="1">F-ATPase subunit alpha</fullName>
    </alternativeName>
</protein>
<accession>A0ZZ20</accession>